<organism>
    <name type="scientific">Burkholderia pseudomallei (strain 668)</name>
    <dbReference type="NCBI Taxonomy" id="320373"/>
    <lineage>
        <taxon>Bacteria</taxon>
        <taxon>Pseudomonadati</taxon>
        <taxon>Pseudomonadota</taxon>
        <taxon>Betaproteobacteria</taxon>
        <taxon>Burkholderiales</taxon>
        <taxon>Burkholderiaceae</taxon>
        <taxon>Burkholderia</taxon>
        <taxon>pseudomallei group</taxon>
    </lineage>
</organism>
<comment type="function">
    <text evidence="1">Required for maturation of urease via the functional incorporation of the urease nickel metallocenter.</text>
</comment>
<comment type="subunit">
    <text evidence="1">UreD, UreF and UreG form a complex that acts as a GTP-hydrolysis-dependent molecular chaperone, activating the urease apoprotein by helping to assemble the nickel containing metallocenter of UreC. The UreE protein probably delivers the nickel.</text>
</comment>
<comment type="subcellular location">
    <subcellularLocation>
        <location evidence="1">Cytoplasm</location>
    </subcellularLocation>
</comment>
<comment type="similarity">
    <text evidence="1">Belongs to the UreD family.</text>
</comment>
<keyword id="KW-0143">Chaperone</keyword>
<keyword id="KW-0963">Cytoplasm</keyword>
<keyword id="KW-0996">Nickel insertion</keyword>
<dbReference type="EMBL" id="CP000570">
    <property type="protein sequence ID" value="ABN83985.1"/>
    <property type="molecule type" value="Genomic_DNA"/>
</dbReference>
<dbReference type="RefSeq" id="WP_004185533.1">
    <property type="nucleotide sequence ID" value="NC_009074.1"/>
</dbReference>
<dbReference type="SMR" id="A3NCL3"/>
<dbReference type="KEGG" id="bpd:BURPS668_3072"/>
<dbReference type="HOGENOM" id="CLU_056339_0_0_4"/>
<dbReference type="GO" id="GO:0005737">
    <property type="term" value="C:cytoplasm"/>
    <property type="evidence" value="ECO:0007669"/>
    <property type="project" value="UniProtKB-SubCell"/>
</dbReference>
<dbReference type="GO" id="GO:0016151">
    <property type="term" value="F:nickel cation binding"/>
    <property type="evidence" value="ECO:0007669"/>
    <property type="project" value="UniProtKB-UniRule"/>
</dbReference>
<dbReference type="HAMAP" id="MF_01384">
    <property type="entry name" value="UreD"/>
    <property type="match status" value="1"/>
</dbReference>
<dbReference type="InterPro" id="IPR002669">
    <property type="entry name" value="UreD"/>
</dbReference>
<dbReference type="PANTHER" id="PTHR33643">
    <property type="entry name" value="UREASE ACCESSORY PROTEIN D"/>
    <property type="match status" value="1"/>
</dbReference>
<dbReference type="PANTHER" id="PTHR33643:SF1">
    <property type="entry name" value="UREASE ACCESSORY PROTEIN D"/>
    <property type="match status" value="1"/>
</dbReference>
<dbReference type="Pfam" id="PF01774">
    <property type="entry name" value="UreD"/>
    <property type="match status" value="1"/>
</dbReference>
<feature type="chain" id="PRO_0000340440" description="Urease accessory protein UreD">
    <location>
        <begin position="1"/>
        <end position="291"/>
    </location>
</feature>
<name>URED_BURP6</name>
<protein>
    <recommendedName>
        <fullName evidence="1">Urease accessory protein UreD</fullName>
    </recommendedName>
</protein>
<sequence>MSAHEPHTSLVRPAAKAWHARLELGFERQPGGRTALAHRRHVGPLRVQRALYPEGDAICHAVIVHPPGGVAGGDRLEIDVRLDAGTHAVLTTPGATKWYKSNGLDARQRIDIDVGAHAKLDWLPQNNLFFDAAHASLEFVLALGDGASVLGWDATQLGRQAAGEAWSAGSIASFSKIVGPSGRPLWVERARLDAGDPLRAAPQGLGGFAVYGTLWALGAACTEALAESIAPALPFDDALRAGVTCVAPGTLLIRALAHSMEALQRLLAEQWLALRPIVHGVDPKPLRLWQT</sequence>
<accession>A3NCL3</accession>
<evidence type="ECO:0000255" key="1">
    <source>
        <dbReference type="HAMAP-Rule" id="MF_01384"/>
    </source>
</evidence>
<proteinExistence type="inferred from homology"/>
<gene>
    <name evidence="1" type="primary">ureD</name>
    <name type="ordered locus">BURPS668_3072</name>
</gene>
<reference key="1">
    <citation type="journal article" date="2010" name="Genome Biol. Evol.">
        <title>Continuing evolution of Burkholderia mallei through genome reduction and large-scale rearrangements.</title>
        <authorList>
            <person name="Losada L."/>
            <person name="Ronning C.M."/>
            <person name="DeShazer D."/>
            <person name="Woods D."/>
            <person name="Fedorova N."/>
            <person name="Kim H.S."/>
            <person name="Shabalina S.A."/>
            <person name="Pearson T.R."/>
            <person name="Brinkac L."/>
            <person name="Tan P."/>
            <person name="Nandi T."/>
            <person name="Crabtree J."/>
            <person name="Badger J."/>
            <person name="Beckstrom-Sternberg S."/>
            <person name="Saqib M."/>
            <person name="Schutzer S.E."/>
            <person name="Keim P."/>
            <person name="Nierman W.C."/>
        </authorList>
    </citation>
    <scope>NUCLEOTIDE SEQUENCE [LARGE SCALE GENOMIC DNA]</scope>
    <source>
        <strain>668</strain>
    </source>
</reference>